<accession>P57454</accession>
<name>PNP_BUCAI</name>
<comment type="function">
    <text evidence="1">Involved in mRNA degradation. Catalyzes the phosphorolysis of single-stranded polyribonucleotides processively in the 3'- to 5'-direction.</text>
</comment>
<comment type="catalytic activity">
    <reaction evidence="1">
        <text>RNA(n+1) + phosphate = RNA(n) + a ribonucleoside 5'-diphosphate</text>
        <dbReference type="Rhea" id="RHEA:22096"/>
        <dbReference type="Rhea" id="RHEA-COMP:14527"/>
        <dbReference type="Rhea" id="RHEA-COMP:17342"/>
        <dbReference type="ChEBI" id="CHEBI:43474"/>
        <dbReference type="ChEBI" id="CHEBI:57930"/>
        <dbReference type="ChEBI" id="CHEBI:140395"/>
        <dbReference type="EC" id="2.7.7.8"/>
    </reaction>
</comment>
<comment type="cofactor">
    <cofactor evidence="1">
        <name>Mg(2+)</name>
        <dbReference type="ChEBI" id="CHEBI:18420"/>
    </cofactor>
</comment>
<comment type="subunit">
    <text evidence="1">Component of the RNA degradosome, which is a multiprotein complex involved in RNA processing and mRNA degradation.</text>
</comment>
<comment type="subcellular location">
    <subcellularLocation>
        <location evidence="1">Cytoplasm</location>
    </subcellularLocation>
</comment>
<comment type="similarity">
    <text evidence="1">Belongs to the polyribonucleotide nucleotidyltransferase family.</text>
</comment>
<proteinExistence type="inferred from homology"/>
<dbReference type="EC" id="2.7.7.8" evidence="1"/>
<dbReference type="EMBL" id="BA000003">
    <property type="protein sequence ID" value="BAB13077.1"/>
    <property type="molecule type" value="Genomic_DNA"/>
</dbReference>
<dbReference type="RefSeq" id="NP_240191.1">
    <property type="nucleotide sequence ID" value="NC_002528.1"/>
</dbReference>
<dbReference type="RefSeq" id="WP_009874331.1">
    <property type="nucleotide sequence ID" value="NZ_AP036055.1"/>
</dbReference>
<dbReference type="SMR" id="P57454"/>
<dbReference type="STRING" id="563178.BUAP5A_366"/>
<dbReference type="EnsemblBacteria" id="BAB13077">
    <property type="protein sequence ID" value="BAB13077"/>
    <property type="gene ID" value="BAB13077"/>
</dbReference>
<dbReference type="KEGG" id="buc:BU373"/>
<dbReference type="PATRIC" id="fig|107806.10.peg.387"/>
<dbReference type="eggNOG" id="COG1185">
    <property type="taxonomic scope" value="Bacteria"/>
</dbReference>
<dbReference type="HOGENOM" id="CLU_004217_2_2_6"/>
<dbReference type="Proteomes" id="UP000001806">
    <property type="component" value="Chromosome"/>
</dbReference>
<dbReference type="GO" id="GO:0005829">
    <property type="term" value="C:cytosol"/>
    <property type="evidence" value="ECO:0007669"/>
    <property type="project" value="TreeGrafter"/>
</dbReference>
<dbReference type="GO" id="GO:0000175">
    <property type="term" value="F:3'-5'-RNA exonuclease activity"/>
    <property type="evidence" value="ECO:0007669"/>
    <property type="project" value="TreeGrafter"/>
</dbReference>
<dbReference type="GO" id="GO:0000287">
    <property type="term" value="F:magnesium ion binding"/>
    <property type="evidence" value="ECO:0007669"/>
    <property type="project" value="UniProtKB-UniRule"/>
</dbReference>
<dbReference type="GO" id="GO:0004654">
    <property type="term" value="F:polyribonucleotide nucleotidyltransferase activity"/>
    <property type="evidence" value="ECO:0007669"/>
    <property type="project" value="UniProtKB-UniRule"/>
</dbReference>
<dbReference type="GO" id="GO:0003723">
    <property type="term" value="F:RNA binding"/>
    <property type="evidence" value="ECO:0007669"/>
    <property type="project" value="UniProtKB-UniRule"/>
</dbReference>
<dbReference type="GO" id="GO:0006402">
    <property type="term" value="P:mRNA catabolic process"/>
    <property type="evidence" value="ECO:0007669"/>
    <property type="project" value="UniProtKB-UniRule"/>
</dbReference>
<dbReference type="GO" id="GO:0006396">
    <property type="term" value="P:RNA processing"/>
    <property type="evidence" value="ECO:0007669"/>
    <property type="project" value="InterPro"/>
</dbReference>
<dbReference type="CDD" id="cd02393">
    <property type="entry name" value="KH-I_PNPase"/>
    <property type="match status" value="1"/>
</dbReference>
<dbReference type="CDD" id="cd11363">
    <property type="entry name" value="RNase_PH_PNPase_1"/>
    <property type="match status" value="1"/>
</dbReference>
<dbReference type="CDD" id="cd11364">
    <property type="entry name" value="RNase_PH_PNPase_2"/>
    <property type="match status" value="1"/>
</dbReference>
<dbReference type="CDD" id="cd04472">
    <property type="entry name" value="S1_PNPase"/>
    <property type="match status" value="1"/>
</dbReference>
<dbReference type="FunFam" id="2.40.50.140:FF:000023">
    <property type="entry name" value="Polyribonucleotide nucleotidyltransferase"/>
    <property type="match status" value="1"/>
</dbReference>
<dbReference type="FunFam" id="3.30.1370.10:FF:000001">
    <property type="entry name" value="Polyribonucleotide nucleotidyltransferase"/>
    <property type="match status" value="1"/>
</dbReference>
<dbReference type="FunFam" id="3.30.230.70:FF:000001">
    <property type="entry name" value="Polyribonucleotide nucleotidyltransferase"/>
    <property type="match status" value="1"/>
</dbReference>
<dbReference type="FunFam" id="3.30.230.70:FF:000002">
    <property type="entry name" value="Polyribonucleotide nucleotidyltransferase"/>
    <property type="match status" value="1"/>
</dbReference>
<dbReference type="Gene3D" id="3.30.230.70">
    <property type="entry name" value="GHMP Kinase, N-terminal domain"/>
    <property type="match status" value="2"/>
</dbReference>
<dbReference type="Gene3D" id="3.30.1370.10">
    <property type="entry name" value="K Homology domain, type 1"/>
    <property type="match status" value="1"/>
</dbReference>
<dbReference type="Gene3D" id="2.40.50.140">
    <property type="entry name" value="Nucleic acid-binding proteins"/>
    <property type="match status" value="1"/>
</dbReference>
<dbReference type="HAMAP" id="MF_01595">
    <property type="entry name" value="PNPase"/>
    <property type="match status" value="1"/>
</dbReference>
<dbReference type="InterPro" id="IPR001247">
    <property type="entry name" value="ExoRNase_PH_dom1"/>
</dbReference>
<dbReference type="InterPro" id="IPR015847">
    <property type="entry name" value="ExoRNase_PH_dom2"/>
</dbReference>
<dbReference type="InterPro" id="IPR036345">
    <property type="entry name" value="ExoRNase_PH_dom2_sf"/>
</dbReference>
<dbReference type="InterPro" id="IPR004087">
    <property type="entry name" value="KH_dom"/>
</dbReference>
<dbReference type="InterPro" id="IPR004088">
    <property type="entry name" value="KH_dom_type_1"/>
</dbReference>
<dbReference type="InterPro" id="IPR036612">
    <property type="entry name" value="KH_dom_type_1_sf"/>
</dbReference>
<dbReference type="InterPro" id="IPR012340">
    <property type="entry name" value="NA-bd_OB-fold"/>
</dbReference>
<dbReference type="InterPro" id="IPR012162">
    <property type="entry name" value="PNPase"/>
</dbReference>
<dbReference type="InterPro" id="IPR027408">
    <property type="entry name" value="PNPase/RNase_PH_dom_sf"/>
</dbReference>
<dbReference type="InterPro" id="IPR015848">
    <property type="entry name" value="PNPase_PH_RNA-bd_bac/org-type"/>
</dbReference>
<dbReference type="InterPro" id="IPR036456">
    <property type="entry name" value="PNPase_PH_RNA-bd_sf"/>
</dbReference>
<dbReference type="InterPro" id="IPR020568">
    <property type="entry name" value="Ribosomal_Su5_D2-typ_SF"/>
</dbReference>
<dbReference type="InterPro" id="IPR003029">
    <property type="entry name" value="S1_domain"/>
</dbReference>
<dbReference type="NCBIfam" id="TIGR03591">
    <property type="entry name" value="polynuc_phos"/>
    <property type="match status" value="1"/>
</dbReference>
<dbReference type="NCBIfam" id="NF008805">
    <property type="entry name" value="PRK11824.1"/>
    <property type="match status" value="1"/>
</dbReference>
<dbReference type="PANTHER" id="PTHR11252">
    <property type="entry name" value="POLYRIBONUCLEOTIDE NUCLEOTIDYLTRANSFERASE"/>
    <property type="match status" value="1"/>
</dbReference>
<dbReference type="PANTHER" id="PTHR11252:SF0">
    <property type="entry name" value="POLYRIBONUCLEOTIDE NUCLEOTIDYLTRANSFERASE 1, MITOCHONDRIAL"/>
    <property type="match status" value="1"/>
</dbReference>
<dbReference type="Pfam" id="PF00013">
    <property type="entry name" value="KH_1"/>
    <property type="match status" value="1"/>
</dbReference>
<dbReference type="Pfam" id="PF03726">
    <property type="entry name" value="PNPase"/>
    <property type="match status" value="1"/>
</dbReference>
<dbReference type="Pfam" id="PF01138">
    <property type="entry name" value="RNase_PH"/>
    <property type="match status" value="2"/>
</dbReference>
<dbReference type="Pfam" id="PF03725">
    <property type="entry name" value="RNase_PH_C"/>
    <property type="match status" value="2"/>
</dbReference>
<dbReference type="Pfam" id="PF00575">
    <property type="entry name" value="S1"/>
    <property type="match status" value="1"/>
</dbReference>
<dbReference type="PIRSF" id="PIRSF005499">
    <property type="entry name" value="PNPase"/>
    <property type="match status" value="1"/>
</dbReference>
<dbReference type="SMART" id="SM00322">
    <property type="entry name" value="KH"/>
    <property type="match status" value="1"/>
</dbReference>
<dbReference type="SMART" id="SM00316">
    <property type="entry name" value="S1"/>
    <property type="match status" value="1"/>
</dbReference>
<dbReference type="SUPFAM" id="SSF54791">
    <property type="entry name" value="Eukaryotic type KH-domain (KH-domain type I)"/>
    <property type="match status" value="1"/>
</dbReference>
<dbReference type="SUPFAM" id="SSF50249">
    <property type="entry name" value="Nucleic acid-binding proteins"/>
    <property type="match status" value="1"/>
</dbReference>
<dbReference type="SUPFAM" id="SSF46915">
    <property type="entry name" value="Polynucleotide phosphorylase/guanosine pentaphosphate synthase (PNPase/GPSI), domain 3"/>
    <property type="match status" value="1"/>
</dbReference>
<dbReference type="SUPFAM" id="SSF55666">
    <property type="entry name" value="Ribonuclease PH domain 2-like"/>
    <property type="match status" value="2"/>
</dbReference>
<dbReference type="SUPFAM" id="SSF54211">
    <property type="entry name" value="Ribosomal protein S5 domain 2-like"/>
    <property type="match status" value="2"/>
</dbReference>
<dbReference type="PROSITE" id="PS50084">
    <property type="entry name" value="KH_TYPE_1"/>
    <property type="match status" value="1"/>
</dbReference>
<dbReference type="PROSITE" id="PS50126">
    <property type="entry name" value="S1"/>
    <property type="match status" value="1"/>
</dbReference>
<protein>
    <recommendedName>
        <fullName evidence="1">Polyribonucleotide nucleotidyltransferase</fullName>
        <ecNumber evidence="1">2.7.7.8</ecNumber>
    </recommendedName>
    <alternativeName>
        <fullName evidence="1">Polynucleotide phosphorylase</fullName>
        <shortName evidence="1">PNPase</shortName>
    </alternativeName>
</protein>
<organism>
    <name type="scientific">Buchnera aphidicola subsp. Acyrthosiphon pisum (strain APS)</name>
    <name type="common">Acyrthosiphon pisum symbiotic bacterium</name>
    <dbReference type="NCBI Taxonomy" id="107806"/>
    <lineage>
        <taxon>Bacteria</taxon>
        <taxon>Pseudomonadati</taxon>
        <taxon>Pseudomonadota</taxon>
        <taxon>Gammaproteobacteria</taxon>
        <taxon>Enterobacterales</taxon>
        <taxon>Erwiniaceae</taxon>
        <taxon>Buchnera</taxon>
    </lineage>
</organism>
<gene>
    <name evidence="1" type="primary">pnp</name>
    <name type="ordered locus">BU373</name>
</gene>
<reference key="1">
    <citation type="journal article" date="2000" name="Nature">
        <title>Genome sequence of the endocellular bacterial symbiont of aphids Buchnera sp. APS.</title>
        <authorList>
            <person name="Shigenobu S."/>
            <person name="Watanabe H."/>
            <person name="Hattori M."/>
            <person name="Sakaki Y."/>
            <person name="Ishikawa H."/>
        </authorList>
    </citation>
    <scope>NUCLEOTIDE SEQUENCE [LARGE SCALE GENOMIC DNA]</scope>
    <source>
        <strain>APS</strain>
    </source>
</reference>
<feature type="chain" id="PRO_0000197910" description="Polyribonucleotide nucleotidyltransferase">
    <location>
        <begin position="1"/>
        <end position="707"/>
    </location>
</feature>
<feature type="domain" description="KH" evidence="1">
    <location>
        <begin position="553"/>
        <end position="612"/>
    </location>
</feature>
<feature type="domain" description="S1 motif" evidence="1">
    <location>
        <begin position="622"/>
        <end position="690"/>
    </location>
</feature>
<feature type="binding site" evidence="1">
    <location>
        <position position="486"/>
    </location>
    <ligand>
        <name>Mg(2+)</name>
        <dbReference type="ChEBI" id="CHEBI:18420"/>
    </ligand>
</feature>
<feature type="binding site" evidence="1">
    <location>
        <position position="492"/>
    </location>
    <ligand>
        <name>Mg(2+)</name>
        <dbReference type="ChEBI" id="CHEBI:18420"/>
    </ligand>
</feature>
<keyword id="KW-0963">Cytoplasm</keyword>
<keyword id="KW-0460">Magnesium</keyword>
<keyword id="KW-0479">Metal-binding</keyword>
<keyword id="KW-0548">Nucleotidyltransferase</keyword>
<keyword id="KW-1185">Reference proteome</keyword>
<keyword id="KW-0694">RNA-binding</keyword>
<keyword id="KW-0808">Transferase</keyword>
<evidence type="ECO:0000255" key="1">
    <source>
        <dbReference type="HAMAP-Rule" id="MF_01595"/>
    </source>
</evidence>
<sequence length="707" mass="78234">MLNPIVRKFQYGQHTITLETGVIARQANAAVMASMDETAVFVTVVGQKKIHTGQKFFPLTVNYQERTYAAGRIPGGFFRREGRPSENEILTARLIDRPLRPLFPKKFLNEIQIIATVVSVNPQINPDIISIIGASAALSLSGIPFYGPVGAARVGYINNQYILNPISDDMKNSSLDLVVSGTQNAILMVEAESKILSEEKILGAIIFGHQQQQVVINNIRSLSNEASKLPWVISYPETNKTLELKIINSFEKNISDAYVIFNKQDRIEKLNSIKENIIKLFLDENSNIDTLEIEDIFQKIEKKVVRKRILSNQTRIDGREKDMIRALDVRTGILPRTHGSALFTRGETQSLVSVTLGTSRDAQNLDELLGDRIDNFLFHYNFPPYSVGEIGMVGSPKRREIGHGRLAKRSLLAVMPTLENFPYTIRVVSEITESNGSSSMASVCGASLALMDAGVPIKSAVAGISMGLVKEGNQHVLLSDILGDEDHLGDMDFKVAGTEEGITALQMDMKIEGITNEIIHSALNEARLARLHILNVMNQALNESRSEISEFAPRIHIIKINPEKIKDVIGKGGSVIRMLTEETGTIIEIEDDGTVKISSTVKEKAKNAIRRIKEITAEIEVGRIYSGKVTRIVDFGAFVSIGLGKEGLVHISQISDKRVDKVSNHLKIDQIISVKVLEIDRQGRLRLSIKEIDSSILSNKSINNSII</sequence>